<name>NRDR_BORPE</name>
<accession>Q7VUW8</accession>
<feature type="chain" id="PRO_0000182273" description="Transcriptional repressor NrdR">
    <location>
        <begin position="1"/>
        <end position="160"/>
    </location>
</feature>
<feature type="domain" description="ATP-cone" evidence="1">
    <location>
        <begin position="49"/>
        <end position="139"/>
    </location>
</feature>
<feature type="zinc finger region" evidence="1">
    <location>
        <begin position="3"/>
        <end position="34"/>
    </location>
</feature>
<proteinExistence type="inferred from homology"/>
<gene>
    <name evidence="1" type="primary">nrdR</name>
    <name type="ordered locus">BP2951</name>
</gene>
<sequence>MRCPFCGNADTQVVDSRVSEEGDTIRRRRRCLSCDKRFTTYERVELAMPSVVKRDGSRTEYDAGKVRGSLSLALRKRPVSTDEVDSAVARIEETLLASGMREVPSEQIGELVMGELKRLDKVAYVRYASVYKSFEDIGEFVEAIREMQGPLLPGKKLRKD</sequence>
<protein>
    <recommendedName>
        <fullName evidence="1">Transcriptional repressor NrdR</fullName>
    </recommendedName>
</protein>
<keyword id="KW-0067">ATP-binding</keyword>
<keyword id="KW-0238">DNA-binding</keyword>
<keyword id="KW-0479">Metal-binding</keyword>
<keyword id="KW-0547">Nucleotide-binding</keyword>
<keyword id="KW-1185">Reference proteome</keyword>
<keyword id="KW-0678">Repressor</keyword>
<keyword id="KW-0804">Transcription</keyword>
<keyword id="KW-0805">Transcription regulation</keyword>
<keyword id="KW-0862">Zinc</keyword>
<keyword id="KW-0863">Zinc-finger</keyword>
<organism>
    <name type="scientific">Bordetella pertussis (strain Tohama I / ATCC BAA-589 / NCTC 13251)</name>
    <dbReference type="NCBI Taxonomy" id="257313"/>
    <lineage>
        <taxon>Bacteria</taxon>
        <taxon>Pseudomonadati</taxon>
        <taxon>Pseudomonadota</taxon>
        <taxon>Betaproteobacteria</taxon>
        <taxon>Burkholderiales</taxon>
        <taxon>Alcaligenaceae</taxon>
        <taxon>Bordetella</taxon>
    </lineage>
</organism>
<comment type="function">
    <text evidence="1">Negatively regulates transcription of bacterial ribonucleotide reductase nrd genes and operons by binding to NrdR-boxes.</text>
</comment>
<comment type="cofactor">
    <cofactor evidence="1">
        <name>Zn(2+)</name>
        <dbReference type="ChEBI" id="CHEBI:29105"/>
    </cofactor>
    <text evidence="1">Binds 1 zinc ion.</text>
</comment>
<comment type="similarity">
    <text evidence="1">Belongs to the NrdR family.</text>
</comment>
<reference key="1">
    <citation type="journal article" date="2003" name="Nat. Genet.">
        <title>Comparative analysis of the genome sequences of Bordetella pertussis, Bordetella parapertussis and Bordetella bronchiseptica.</title>
        <authorList>
            <person name="Parkhill J."/>
            <person name="Sebaihia M."/>
            <person name="Preston A."/>
            <person name="Murphy L.D."/>
            <person name="Thomson N.R."/>
            <person name="Harris D.E."/>
            <person name="Holden M.T.G."/>
            <person name="Churcher C.M."/>
            <person name="Bentley S.D."/>
            <person name="Mungall K.L."/>
            <person name="Cerdeno-Tarraga A.-M."/>
            <person name="Temple L."/>
            <person name="James K.D."/>
            <person name="Harris B."/>
            <person name="Quail M.A."/>
            <person name="Achtman M."/>
            <person name="Atkin R."/>
            <person name="Baker S."/>
            <person name="Basham D."/>
            <person name="Bason N."/>
            <person name="Cherevach I."/>
            <person name="Chillingworth T."/>
            <person name="Collins M."/>
            <person name="Cronin A."/>
            <person name="Davis P."/>
            <person name="Doggett J."/>
            <person name="Feltwell T."/>
            <person name="Goble A."/>
            <person name="Hamlin N."/>
            <person name="Hauser H."/>
            <person name="Holroyd S."/>
            <person name="Jagels K."/>
            <person name="Leather S."/>
            <person name="Moule S."/>
            <person name="Norberczak H."/>
            <person name="O'Neil S."/>
            <person name="Ormond D."/>
            <person name="Price C."/>
            <person name="Rabbinowitsch E."/>
            <person name="Rutter S."/>
            <person name="Sanders M."/>
            <person name="Saunders D."/>
            <person name="Seeger K."/>
            <person name="Sharp S."/>
            <person name="Simmonds M."/>
            <person name="Skelton J."/>
            <person name="Squares R."/>
            <person name="Squares S."/>
            <person name="Stevens K."/>
            <person name="Unwin L."/>
            <person name="Whitehead S."/>
            <person name="Barrell B.G."/>
            <person name="Maskell D.J."/>
        </authorList>
    </citation>
    <scope>NUCLEOTIDE SEQUENCE [LARGE SCALE GENOMIC DNA]</scope>
    <source>
        <strain>Tohama I / ATCC BAA-589 / NCTC 13251</strain>
    </source>
</reference>
<evidence type="ECO:0000255" key="1">
    <source>
        <dbReference type="HAMAP-Rule" id="MF_00440"/>
    </source>
</evidence>
<dbReference type="EMBL" id="BX640420">
    <property type="protein sequence ID" value="CAE43223.1"/>
    <property type="molecule type" value="Genomic_DNA"/>
</dbReference>
<dbReference type="RefSeq" id="NP_881530.1">
    <property type="nucleotide sequence ID" value="NC_002929.2"/>
</dbReference>
<dbReference type="RefSeq" id="WP_003814871.1">
    <property type="nucleotide sequence ID" value="NZ_CP039022.1"/>
</dbReference>
<dbReference type="SMR" id="Q7VUW8"/>
<dbReference type="STRING" id="257313.BP2951"/>
<dbReference type="PaxDb" id="257313-BP2951"/>
<dbReference type="GeneID" id="93205674"/>
<dbReference type="KEGG" id="bpe:BP2951"/>
<dbReference type="PATRIC" id="fig|257313.5.peg.3190"/>
<dbReference type="eggNOG" id="COG1327">
    <property type="taxonomic scope" value="Bacteria"/>
</dbReference>
<dbReference type="HOGENOM" id="CLU_108412_0_1_4"/>
<dbReference type="Proteomes" id="UP000002676">
    <property type="component" value="Chromosome"/>
</dbReference>
<dbReference type="GO" id="GO:0005524">
    <property type="term" value="F:ATP binding"/>
    <property type="evidence" value="ECO:0007669"/>
    <property type="project" value="UniProtKB-KW"/>
</dbReference>
<dbReference type="GO" id="GO:0003677">
    <property type="term" value="F:DNA binding"/>
    <property type="evidence" value="ECO:0007669"/>
    <property type="project" value="UniProtKB-KW"/>
</dbReference>
<dbReference type="GO" id="GO:0008270">
    <property type="term" value="F:zinc ion binding"/>
    <property type="evidence" value="ECO:0007669"/>
    <property type="project" value="UniProtKB-UniRule"/>
</dbReference>
<dbReference type="GO" id="GO:0045892">
    <property type="term" value="P:negative regulation of DNA-templated transcription"/>
    <property type="evidence" value="ECO:0007669"/>
    <property type="project" value="UniProtKB-UniRule"/>
</dbReference>
<dbReference type="HAMAP" id="MF_00440">
    <property type="entry name" value="NrdR"/>
    <property type="match status" value="1"/>
</dbReference>
<dbReference type="InterPro" id="IPR005144">
    <property type="entry name" value="ATP-cone_dom"/>
</dbReference>
<dbReference type="InterPro" id="IPR055173">
    <property type="entry name" value="NrdR-like_N"/>
</dbReference>
<dbReference type="InterPro" id="IPR003796">
    <property type="entry name" value="RNR_NrdR-like"/>
</dbReference>
<dbReference type="NCBIfam" id="TIGR00244">
    <property type="entry name" value="transcriptional regulator NrdR"/>
    <property type="match status" value="1"/>
</dbReference>
<dbReference type="PANTHER" id="PTHR30455">
    <property type="entry name" value="TRANSCRIPTIONAL REPRESSOR NRDR"/>
    <property type="match status" value="1"/>
</dbReference>
<dbReference type="PANTHER" id="PTHR30455:SF2">
    <property type="entry name" value="TRANSCRIPTIONAL REPRESSOR NRDR"/>
    <property type="match status" value="1"/>
</dbReference>
<dbReference type="Pfam" id="PF03477">
    <property type="entry name" value="ATP-cone"/>
    <property type="match status" value="1"/>
</dbReference>
<dbReference type="Pfam" id="PF22811">
    <property type="entry name" value="Zn_ribbon_NrdR"/>
    <property type="match status" value="1"/>
</dbReference>
<dbReference type="PROSITE" id="PS51161">
    <property type="entry name" value="ATP_CONE"/>
    <property type="match status" value="1"/>
</dbReference>